<accession>Q01550</accession>
<feature type="chain" id="PRO_0000063861" description="Tanabin">
    <location>
        <begin position="1"/>
        <end position="1744"/>
    </location>
</feature>
<feature type="domain" description="IF rod" evidence="1">
    <location>
        <begin position="13"/>
        <end position="320"/>
    </location>
</feature>
<feature type="region of interest" description="Head">
    <location>
        <begin position="1"/>
        <end position="12"/>
    </location>
</feature>
<feature type="region of interest" description="Coil 1A">
    <location>
        <begin position="8"/>
        <end position="48"/>
    </location>
</feature>
<feature type="region of interest" description="Linker 1">
    <location>
        <begin position="49"/>
        <end position="60"/>
    </location>
</feature>
<feature type="region of interest" description="Coil 1B">
    <location>
        <begin position="61"/>
        <end position="156"/>
    </location>
</feature>
<feature type="region of interest" description="Linker 12">
    <location>
        <begin position="157"/>
        <end position="179"/>
    </location>
</feature>
<feature type="region of interest" description="Coil 2A">
    <location>
        <begin position="180"/>
        <end position="193"/>
    </location>
</feature>
<feature type="region of interest" description="Linker 2">
    <location>
        <begin position="194"/>
        <end position="199"/>
    </location>
</feature>
<feature type="region of interest" description="Coil 2B">
    <location>
        <begin position="200"/>
        <end position="314"/>
    </location>
</feature>
<feature type="region of interest" description="Tail">
    <location>
        <begin position="315"/>
        <end position="1744"/>
    </location>
</feature>
<feature type="region of interest" description="Disordered" evidence="2">
    <location>
        <begin position="341"/>
        <end position="372"/>
    </location>
</feature>
<feature type="region of interest" description="Disordered" evidence="2">
    <location>
        <begin position="785"/>
        <end position="816"/>
    </location>
</feature>
<feature type="region of interest" description="Disordered" evidence="2">
    <location>
        <begin position="976"/>
        <end position="996"/>
    </location>
</feature>
<feature type="region of interest" description="Disordered" evidence="2">
    <location>
        <begin position="1032"/>
        <end position="1093"/>
    </location>
</feature>
<feature type="region of interest" description="Disordered" evidence="2">
    <location>
        <begin position="1340"/>
        <end position="1470"/>
    </location>
</feature>
<feature type="region of interest" description="Disordered" evidence="2">
    <location>
        <begin position="1485"/>
        <end position="1506"/>
    </location>
</feature>
<feature type="region of interest" description="Disordered" evidence="2">
    <location>
        <begin position="1560"/>
        <end position="1722"/>
    </location>
</feature>
<feature type="compositionally biased region" description="Basic and acidic residues" evidence="2">
    <location>
        <begin position="341"/>
        <end position="371"/>
    </location>
</feature>
<feature type="compositionally biased region" description="Basic and acidic residues" evidence="2">
    <location>
        <begin position="785"/>
        <end position="815"/>
    </location>
</feature>
<feature type="compositionally biased region" description="Polar residues" evidence="2">
    <location>
        <begin position="980"/>
        <end position="990"/>
    </location>
</feature>
<feature type="compositionally biased region" description="Acidic residues" evidence="2">
    <location>
        <begin position="1034"/>
        <end position="1056"/>
    </location>
</feature>
<feature type="compositionally biased region" description="Basic and acidic residues" evidence="2">
    <location>
        <begin position="1074"/>
        <end position="1086"/>
    </location>
</feature>
<feature type="compositionally biased region" description="Acidic residues" evidence="2">
    <location>
        <begin position="1340"/>
        <end position="1351"/>
    </location>
</feature>
<feature type="compositionally biased region" description="Basic and acidic residues" evidence="2">
    <location>
        <begin position="1352"/>
        <end position="1367"/>
    </location>
</feature>
<feature type="compositionally biased region" description="Acidic residues" evidence="2">
    <location>
        <begin position="1368"/>
        <end position="1377"/>
    </location>
</feature>
<feature type="compositionally biased region" description="Basic and acidic residues" evidence="2">
    <location>
        <begin position="1386"/>
        <end position="1398"/>
    </location>
</feature>
<feature type="compositionally biased region" description="Acidic residues" evidence="2">
    <location>
        <begin position="1412"/>
        <end position="1421"/>
    </location>
</feature>
<feature type="compositionally biased region" description="Basic and acidic residues" evidence="2">
    <location>
        <begin position="1423"/>
        <end position="1432"/>
    </location>
</feature>
<feature type="compositionally biased region" description="Polar residues" evidence="2">
    <location>
        <begin position="1433"/>
        <end position="1442"/>
    </location>
</feature>
<feature type="compositionally biased region" description="Basic and acidic residues" evidence="2">
    <location>
        <begin position="1445"/>
        <end position="1460"/>
    </location>
</feature>
<feature type="compositionally biased region" description="Acidic residues" evidence="2">
    <location>
        <begin position="1496"/>
        <end position="1505"/>
    </location>
</feature>
<feature type="compositionally biased region" description="Polar residues" evidence="2">
    <location>
        <begin position="1576"/>
        <end position="1586"/>
    </location>
</feature>
<feature type="compositionally biased region" description="Polar residues" evidence="2">
    <location>
        <begin position="1597"/>
        <end position="1621"/>
    </location>
</feature>
<feature type="compositionally biased region" description="Polar residues" evidence="2">
    <location>
        <begin position="1629"/>
        <end position="1639"/>
    </location>
</feature>
<feature type="compositionally biased region" description="Acidic residues" evidence="2">
    <location>
        <begin position="1680"/>
        <end position="1691"/>
    </location>
</feature>
<feature type="compositionally biased region" description="Basic and acidic residues" evidence="2">
    <location>
        <begin position="1698"/>
        <end position="1709"/>
    </location>
</feature>
<protein>
    <recommendedName>
        <fullName>Tanabin</fullName>
    </recommendedName>
</protein>
<proteinExistence type="evidence at transcript level"/>
<sequence>MEGYLASVSLGEESTQMWSLNKRLEAYLSRVKALEEENELLRKEIHSLRSSKSERCWKKKHHEEMMKLRDALDDGHREMVQAEMVRDSIYEEIEFVKQRCLEEKQAREDAKKELSESKKLLEEETRAQIWLKERLGQLEAELEDILRDHEEEKALMEEEIASFSQRLENFRVAPVAFKPVEVDDYARKLSEIWQGAVEEYKSEVSVLEAGLSESKENLRKVLEENKQNRLLLQSLDKELVSLKMRKEALEDLLSKQWQEQKEEEEKLQRKAEALEQEKQDLRGQIAEVLEDRQQLMHLKMSLSLEVATYRSLLEAESTRIYTDYRGSYTFNDSMLEHNNVRRRQSEDTRKTVSKDHRQSYSKKQIGDKNELQRPSLNNFSTVKSSAVPVRTSPVTKEFQKVSSVLQSQGLKYTKAPQVKEVQTVSTVKSNLETHTFSGDAFRRAQVETRKTDEQVIKKDALGLNDLNKNTGFKEEKDIQKPGFMDHVVSKSVSSTEHKVPEIDPLESALKSLEEDLSSVSSTFNAGQSSNLEAIKDVLGEPICLENLQNEIAFEKESPGTNAAADPIEEVISESVSYQTVHFEKQELSNLLEIENTHENHVQDATQAFNSCEQDGHDRASTLENNEPDVQQYIRTLESNEIKESKIPSDNTEEAEIISKSRKVFLENEYIPVSKDDLTEFTSHLENDSESSQSFDSKLFENKSTEDQLITNLKSNTQENIFQSNQEHLENLEFDSVVPDTVKFMYPQENNLLEEENVYGDGELVQMATDENIINQSSDQLLLSDHSHHEETKTSESIAVEHNRMESEHAEVDKSSEIPVEISENVSVEEIIHEISDVEEDTKQAFEDERVGEQINQNNQESTVDLDGSVYSQEENSQLEEDEVSISEQIEKDFEINEQECLKSDQIREAFDTEEVDHQVVDFMQEQSFEREVGQLNNIKQEVDYLQNYDEDSFQNNDEPQELESCDLQEQKIKLEEENQLSENEGNQNFGGNDIEEFSQQGYDTDEICQETIGNQVSAQLLCESDINQDKLSMEDEEEQNNPETEDNIGLEQESDQENTRSNEGTKFSQEECDVVFKPEDMSDKSEYSGQQEDLDKQVTDFSLNEQANNDLLEKEEVILHHADDQRSVNDEITIDEKLSERIIDNELATVDVNESLAANKEQVDLFTDEYAVDDNVGMQDDDSGQYQTKEDLFVDGNNIIEKIEIQQTSLLNQEICERVDNVDEDISGEAKNESVEMNDVVDLVPEAKVTGDEQISPLQDEKLNLETMEDTKDNDGQLCLEKENETEYIEVTDSPQFATDLSHDAGRELTVDQNSANLQFCENPTKTLIAHHIEYETVADSDLESTEEQVQETERIPFKPEDSKMENENSESEESVDSQEISLNSHKSEEFEISKDYQLEQTLPDVTPLPNLEDEFEDLTEQPDVHEEHQNNDDSGASTFITSVDEDKEREVRESVSKDEESNEEEFGDVLSVDKTSQVEVTTLSGLAQEPSYLGDNEESEDSMENAEILNENPSNDIVDFMVSQMTETKIIIAEQVTEQTEVTLQFDDAPNKLTENLNAREKETYDYESNEENIEFTNENQSASPANDIVDENQSEDSVISDNEGTTSSYEDLPNATSISHVVALEESNISTTEQSSTDTKRMTYEGYEITSLQNVEDNAQETEKEFPSGVPLGQEDSRSEDEELDDEGSEFSFGVNDEKANGEHKDVGEDDETEDMLNGHSQTGYSKIVLTSKKALRWKRMF</sequence>
<keyword id="KW-0175">Coiled coil</keyword>
<keyword id="KW-0403">Intermediate filament</keyword>
<keyword id="KW-1185">Reference proteome</keyword>
<evidence type="ECO:0000255" key="1">
    <source>
        <dbReference type="PROSITE-ProRule" id="PRU01188"/>
    </source>
</evidence>
<evidence type="ECO:0000256" key="2">
    <source>
        <dbReference type="SAM" id="MobiDB-lite"/>
    </source>
</evidence>
<organism>
    <name type="scientific">Xenopus laevis</name>
    <name type="common">African clawed frog</name>
    <dbReference type="NCBI Taxonomy" id="8355"/>
    <lineage>
        <taxon>Eukaryota</taxon>
        <taxon>Metazoa</taxon>
        <taxon>Chordata</taxon>
        <taxon>Craniata</taxon>
        <taxon>Vertebrata</taxon>
        <taxon>Euteleostomi</taxon>
        <taxon>Amphibia</taxon>
        <taxon>Batrachia</taxon>
        <taxon>Anura</taxon>
        <taxon>Pipoidea</taxon>
        <taxon>Pipidae</taxon>
        <taxon>Xenopodinae</taxon>
        <taxon>Xenopus</taxon>
        <taxon>Xenopus</taxon>
    </lineage>
</organism>
<dbReference type="EMBL" id="M99387">
    <property type="protein sequence ID" value="AAA49966.1"/>
    <property type="molecule type" value="mRNA"/>
</dbReference>
<dbReference type="PIR" id="JH0720">
    <property type="entry name" value="JH0720"/>
</dbReference>
<dbReference type="RefSeq" id="NP_001081326.1">
    <property type="nucleotide sequence ID" value="NM_001087857.1"/>
</dbReference>
<dbReference type="SMR" id="Q01550"/>
<dbReference type="GeneID" id="397776"/>
<dbReference type="KEGG" id="xla:397776"/>
<dbReference type="AGR" id="Xenbase:XB-GENE-865974"/>
<dbReference type="CTD" id="397776"/>
<dbReference type="Xenbase" id="XB-GENE-865974">
    <property type="gene designation" value="nes.S"/>
</dbReference>
<dbReference type="OrthoDB" id="8886319at2759"/>
<dbReference type="Proteomes" id="UP000186698">
    <property type="component" value="Chromosome 8S"/>
</dbReference>
<dbReference type="Bgee" id="397776">
    <property type="expression patterns" value="Expressed in heart and 14 other cell types or tissues"/>
</dbReference>
<dbReference type="GO" id="GO:0005882">
    <property type="term" value="C:intermediate filament"/>
    <property type="evidence" value="ECO:0000318"/>
    <property type="project" value="GO_Central"/>
</dbReference>
<dbReference type="GO" id="GO:0031730">
    <property type="term" value="F:CCR5 chemokine receptor binding"/>
    <property type="evidence" value="ECO:0000318"/>
    <property type="project" value="GO_Central"/>
</dbReference>
<dbReference type="GO" id="GO:0019215">
    <property type="term" value="F:intermediate filament binding"/>
    <property type="evidence" value="ECO:0007669"/>
    <property type="project" value="InterPro"/>
</dbReference>
<dbReference type="GO" id="GO:0030844">
    <property type="term" value="P:positive regulation of intermediate filament depolymerization"/>
    <property type="evidence" value="ECO:0000318"/>
    <property type="project" value="GO_Central"/>
</dbReference>
<dbReference type="FunFam" id="1.20.5.170:FF:000081">
    <property type="entry name" value="Nestin"/>
    <property type="match status" value="1"/>
</dbReference>
<dbReference type="Gene3D" id="1.20.5.170">
    <property type="match status" value="1"/>
</dbReference>
<dbReference type="Gene3D" id="1.20.5.1160">
    <property type="entry name" value="Vasodilator-stimulated phosphoprotein"/>
    <property type="match status" value="1"/>
</dbReference>
<dbReference type="InterPro" id="IPR018039">
    <property type="entry name" value="IF_conserved"/>
</dbReference>
<dbReference type="InterPro" id="IPR039008">
    <property type="entry name" value="IF_rod_dom"/>
</dbReference>
<dbReference type="InterPro" id="IPR031211">
    <property type="entry name" value="Nestin"/>
</dbReference>
<dbReference type="PANTHER" id="PTHR47051">
    <property type="entry name" value="NESTIN"/>
    <property type="match status" value="1"/>
</dbReference>
<dbReference type="PANTHER" id="PTHR47051:SF1">
    <property type="entry name" value="NESTIN"/>
    <property type="match status" value="1"/>
</dbReference>
<dbReference type="Pfam" id="PF00038">
    <property type="entry name" value="Filament"/>
    <property type="match status" value="1"/>
</dbReference>
<dbReference type="SMART" id="SM01391">
    <property type="entry name" value="Filament"/>
    <property type="match status" value="1"/>
</dbReference>
<dbReference type="SUPFAM" id="SSF64593">
    <property type="entry name" value="Intermediate filament protein, coiled coil region"/>
    <property type="match status" value="1"/>
</dbReference>
<dbReference type="PROSITE" id="PS00226">
    <property type="entry name" value="IF_ROD_1"/>
    <property type="match status" value="1"/>
</dbReference>
<dbReference type="PROSITE" id="PS51842">
    <property type="entry name" value="IF_ROD_2"/>
    <property type="match status" value="1"/>
</dbReference>
<comment type="tissue specificity">
    <text>Growth cones of embryonic vertebrate neurons.</text>
</comment>
<comment type="developmental stage">
    <text>Expressed in the neurula and persists during embryogenesis in the brain, cranial nerves and spinal cord.</text>
</comment>
<comment type="similarity">
    <text evidence="1">Belongs to the intermediate filament family.</text>
</comment>
<name>TANA_XENLA</name>
<reference key="1">
    <citation type="journal article" date="1992" name="Neuron">
        <title>A protein expressed in the growth cones of embryonic vertebrate neurons defines a new class of intermediate filament protein.</title>
        <authorList>
            <person name="Hemmati-Brivanlou A."/>
            <person name="Mann R.W."/>
            <person name="Harland R.M."/>
        </authorList>
    </citation>
    <scope>NUCLEOTIDE SEQUENCE [MRNA]</scope>
    <source>
        <tissue>Tadpole head</tissue>
    </source>
</reference>